<keyword id="KW-0150">Chloroplast</keyword>
<keyword id="KW-0934">Plastid</keyword>
<keyword id="KW-0687">Ribonucleoprotein</keyword>
<keyword id="KW-0689">Ribosomal protein</keyword>
<keyword id="KW-0691">RNA editing</keyword>
<keyword id="KW-0694">RNA-binding</keyword>
<keyword id="KW-0699">rRNA-binding</keyword>
<accession>Q85FI6</accession>
<organism>
    <name type="scientific">Adiantum capillus-veneris</name>
    <name type="common">Maidenhair fern</name>
    <dbReference type="NCBI Taxonomy" id="13818"/>
    <lineage>
        <taxon>Eukaryota</taxon>
        <taxon>Viridiplantae</taxon>
        <taxon>Streptophyta</taxon>
        <taxon>Embryophyta</taxon>
        <taxon>Tracheophyta</taxon>
        <taxon>Polypodiopsida</taxon>
        <taxon>Polypodiidae</taxon>
        <taxon>Polypodiales</taxon>
        <taxon>Pteridineae</taxon>
        <taxon>Pteridaceae</taxon>
        <taxon>Vittarioideae</taxon>
        <taxon>Adiantum</taxon>
    </lineage>
</organism>
<proteinExistence type="evidence at transcript level"/>
<reference key="1">
    <citation type="journal article" date="2003" name="DNA Res.">
        <title>Complete nucleotide sequence of the chloroplast genome from a leptosporangiate fern, Adiantum capillus-veneris L.</title>
        <authorList>
            <person name="Wolf P.G."/>
            <person name="Rowe C.A."/>
            <person name="Sinclair R.B."/>
            <person name="Hasebe M."/>
        </authorList>
    </citation>
    <scope>NUCLEOTIDE SEQUENCE [LARGE SCALE GENOMIC DNA]</scope>
</reference>
<reference key="2">
    <citation type="journal article" date="2004" name="Gene">
        <title>High levels of RNA editing in a vascular plant chloroplast genome: analysis of transcripts from the fern Adiantum capillus-veneris.</title>
        <authorList>
            <person name="Wolf P.G."/>
            <person name="Rowe C.A."/>
            <person name="Hasebe M."/>
        </authorList>
    </citation>
    <scope>NUCLEOTIDE SEQUENCE [GENOMIC DNA]</scope>
    <scope>RNA EDITING</scope>
    <source>
        <tissue>Frond</tissue>
    </source>
</reference>
<name>RK14_ADICA</name>
<sequence>MIQIQSYLDVADNSGARKLMCIRVLGTGNRKYADIGDIIIAVVKEAVPNMFLKRSEVVRAVVVRTRRGLKRRNGMVLEFDDNAAVIINQEGNPRGTRIFGPVARELRECNFARVVSLAPEVL</sequence>
<feature type="chain" id="PRO_0000128580" description="Large ribosomal subunit protein uL14c">
    <location>
        <begin position="1"/>
        <end position="122"/>
    </location>
</feature>
<geneLocation type="chloroplast"/>
<protein>
    <recommendedName>
        <fullName evidence="1">Large ribosomal subunit protein uL14c</fullName>
    </recommendedName>
    <alternativeName>
        <fullName evidence="3">50S ribosomal protein L14, chloroplastic</fullName>
    </alternativeName>
</protein>
<dbReference type="EMBL" id="AY178864">
    <property type="protein sequence ID" value="AAP29427.2"/>
    <property type="molecule type" value="Genomic_DNA"/>
</dbReference>
<dbReference type="RefSeq" id="NP_848096.2">
    <property type="nucleotide sequence ID" value="NC_004766.1"/>
</dbReference>
<dbReference type="SMR" id="Q85FI6"/>
<dbReference type="GeneID" id="807419"/>
<dbReference type="GO" id="GO:0009507">
    <property type="term" value="C:chloroplast"/>
    <property type="evidence" value="ECO:0007669"/>
    <property type="project" value="UniProtKB-SubCell"/>
</dbReference>
<dbReference type="GO" id="GO:0022625">
    <property type="term" value="C:cytosolic large ribosomal subunit"/>
    <property type="evidence" value="ECO:0007669"/>
    <property type="project" value="TreeGrafter"/>
</dbReference>
<dbReference type="GO" id="GO:0070180">
    <property type="term" value="F:large ribosomal subunit rRNA binding"/>
    <property type="evidence" value="ECO:0007669"/>
    <property type="project" value="TreeGrafter"/>
</dbReference>
<dbReference type="GO" id="GO:0003735">
    <property type="term" value="F:structural constituent of ribosome"/>
    <property type="evidence" value="ECO:0007669"/>
    <property type="project" value="InterPro"/>
</dbReference>
<dbReference type="GO" id="GO:0006412">
    <property type="term" value="P:translation"/>
    <property type="evidence" value="ECO:0007669"/>
    <property type="project" value="UniProtKB-UniRule"/>
</dbReference>
<dbReference type="CDD" id="cd00337">
    <property type="entry name" value="Ribosomal_uL14"/>
    <property type="match status" value="1"/>
</dbReference>
<dbReference type="FunFam" id="2.40.150.20:FF:000001">
    <property type="entry name" value="50S ribosomal protein L14"/>
    <property type="match status" value="1"/>
</dbReference>
<dbReference type="Gene3D" id="2.40.150.20">
    <property type="entry name" value="Ribosomal protein L14"/>
    <property type="match status" value="1"/>
</dbReference>
<dbReference type="HAMAP" id="MF_01367">
    <property type="entry name" value="Ribosomal_uL14"/>
    <property type="match status" value="1"/>
</dbReference>
<dbReference type="InterPro" id="IPR000218">
    <property type="entry name" value="Ribosomal_uL14"/>
</dbReference>
<dbReference type="InterPro" id="IPR005745">
    <property type="entry name" value="Ribosomal_uL14_bac-type"/>
</dbReference>
<dbReference type="InterPro" id="IPR019972">
    <property type="entry name" value="Ribosomal_uL14_CS"/>
</dbReference>
<dbReference type="InterPro" id="IPR036853">
    <property type="entry name" value="Ribosomal_uL14_sf"/>
</dbReference>
<dbReference type="NCBIfam" id="TIGR01067">
    <property type="entry name" value="rplN_bact"/>
    <property type="match status" value="1"/>
</dbReference>
<dbReference type="PANTHER" id="PTHR11761">
    <property type="entry name" value="50S/60S RIBOSOMAL PROTEIN L14/L23"/>
    <property type="match status" value="1"/>
</dbReference>
<dbReference type="PANTHER" id="PTHR11761:SF3">
    <property type="entry name" value="LARGE RIBOSOMAL SUBUNIT PROTEIN UL14M"/>
    <property type="match status" value="1"/>
</dbReference>
<dbReference type="Pfam" id="PF00238">
    <property type="entry name" value="Ribosomal_L14"/>
    <property type="match status" value="1"/>
</dbReference>
<dbReference type="SMART" id="SM01374">
    <property type="entry name" value="Ribosomal_L14"/>
    <property type="match status" value="1"/>
</dbReference>
<dbReference type="SUPFAM" id="SSF50193">
    <property type="entry name" value="Ribosomal protein L14"/>
    <property type="match status" value="1"/>
</dbReference>
<dbReference type="PROSITE" id="PS00049">
    <property type="entry name" value="RIBOSOMAL_L14"/>
    <property type="match status" value="1"/>
</dbReference>
<gene>
    <name evidence="1" type="primary">rpl14</name>
</gene>
<comment type="function">
    <text evidence="1">Binds to 23S rRNA.</text>
</comment>
<comment type="subunit">
    <text evidence="1">Part of the 50S ribosomal subunit.</text>
</comment>
<comment type="subcellular location">
    <subcellularLocation>
        <location>Plastid</location>
        <location>Chloroplast</location>
    </subcellularLocation>
</comment>
<comment type="RNA editing">
    <location>
        <position position="64" evidence="2"/>
    </location>
</comment>
<comment type="similarity">
    <text evidence="1">Belongs to the universal ribosomal protein uL14 family.</text>
</comment>
<evidence type="ECO:0000255" key="1">
    <source>
        <dbReference type="HAMAP-Rule" id="MF_01367"/>
    </source>
</evidence>
<evidence type="ECO:0000269" key="2">
    <source>
    </source>
</evidence>
<evidence type="ECO:0000305" key="3"/>